<feature type="chain" id="PRO_0000350077" description="Dual-specificity RNA methyltransferase RlmN">
    <location>
        <begin position="1"/>
        <end position="378"/>
    </location>
</feature>
<feature type="domain" description="Radical SAM core" evidence="2">
    <location>
        <begin position="101"/>
        <end position="345"/>
    </location>
</feature>
<feature type="active site" description="Proton acceptor" evidence="1">
    <location>
        <position position="95"/>
    </location>
</feature>
<feature type="active site" description="S-methylcysteine intermediate" evidence="1">
    <location>
        <position position="350"/>
    </location>
</feature>
<feature type="binding site" evidence="1">
    <location>
        <position position="115"/>
    </location>
    <ligand>
        <name>[4Fe-4S] cluster</name>
        <dbReference type="ChEBI" id="CHEBI:49883"/>
        <note>4Fe-4S-S-AdoMet</note>
    </ligand>
</feature>
<feature type="binding site" evidence="1">
    <location>
        <position position="119"/>
    </location>
    <ligand>
        <name>[4Fe-4S] cluster</name>
        <dbReference type="ChEBI" id="CHEBI:49883"/>
        <note>4Fe-4S-S-AdoMet</note>
    </ligand>
</feature>
<feature type="binding site" evidence="1">
    <location>
        <position position="122"/>
    </location>
    <ligand>
        <name>[4Fe-4S] cluster</name>
        <dbReference type="ChEBI" id="CHEBI:49883"/>
        <note>4Fe-4S-S-AdoMet</note>
    </ligand>
</feature>
<feature type="binding site" evidence="1">
    <location>
        <begin position="176"/>
        <end position="177"/>
    </location>
    <ligand>
        <name>S-adenosyl-L-methionine</name>
        <dbReference type="ChEBI" id="CHEBI:59789"/>
    </ligand>
</feature>
<feature type="binding site" evidence="1">
    <location>
        <position position="208"/>
    </location>
    <ligand>
        <name>S-adenosyl-L-methionine</name>
        <dbReference type="ChEBI" id="CHEBI:59789"/>
    </ligand>
</feature>
<feature type="binding site" evidence="1">
    <location>
        <begin position="230"/>
        <end position="232"/>
    </location>
    <ligand>
        <name>S-adenosyl-L-methionine</name>
        <dbReference type="ChEBI" id="CHEBI:59789"/>
    </ligand>
</feature>
<feature type="binding site" evidence="1">
    <location>
        <position position="307"/>
    </location>
    <ligand>
        <name>S-adenosyl-L-methionine</name>
        <dbReference type="ChEBI" id="CHEBI:59789"/>
    </ligand>
</feature>
<feature type="disulfide bond" description="(transient)" evidence="1">
    <location>
        <begin position="108"/>
        <end position="350"/>
    </location>
</feature>
<dbReference type="EC" id="2.1.1.192" evidence="1"/>
<dbReference type="EMBL" id="CP000548">
    <property type="protein sequence ID" value="ABO06457.1"/>
    <property type="molecule type" value="Genomic_DNA"/>
</dbReference>
<dbReference type="RefSeq" id="WP_004192451.1">
    <property type="nucleotide sequence ID" value="NZ_CP007802.1"/>
</dbReference>
<dbReference type="SMR" id="A3MK77"/>
<dbReference type="GeneID" id="93060478"/>
<dbReference type="KEGG" id="bmaz:BM44_1988"/>
<dbReference type="KEGG" id="bmn:BMA10247_1109"/>
<dbReference type="PATRIC" id="fig|320389.8.peg.2232"/>
<dbReference type="GO" id="GO:0005737">
    <property type="term" value="C:cytoplasm"/>
    <property type="evidence" value="ECO:0007669"/>
    <property type="project" value="UniProtKB-SubCell"/>
</dbReference>
<dbReference type="GO" id="GO:0051539">
    <property type="term" value="F:4 iron, 4 sulfur cluster binding"/>
    <property type="evidence" value="ECO:0007669"/>
    <property type="project" value="UniProtKB-UniRule"/>
</dbReference>
<dbReference type="GO" id="GO:0046872">
    <property type="term" value="F:metal ion binding"/>
    <property type="evidence" value="ECO:0007669"/>
    <property type="project" value="UniProtKB-KW"/>
</dbReference>
<dbReference type="GO" id="GO:0070040">
    <property type="term" value="F:rRNA (adenine(2503)-C2-)-methyltransferase activity"/>
    <property type="evidence" value="ECO:0007669"/>
    <property type="project" value="UniProtKB-UniRule"/>
</dbReference>
<dbReference type="GO" id="GO:0019843">
    <property type="term" value="F:rRNA binding"/>
    <property type="evidence" value="ECO:0007669"/>
    <property type="project" value="UniProtKB-UniRule"/>
</dbReference>
<dbReference type="GO" id="GO:0002935">
    <property type="term" value="F:tRNA (adenine(37)-C2)-methyltransferase activity"/>
    <property type="evidence" value="ECO:0007669"/>
    <property type="project" value="UniProtKB-UniRule"/>
</dbReference>
<dbReference type="GO" id="GO:0000049">
    <property type="term" value="F:tRNA binding"/>
    <property type="evidence" value="ECO:0007669"/>
    <property type="project" value="UniProtKB-UniRule"/>
</dbReference>
<dbReference type="GO" id="GO:0070475">
    <property type="term" value="P:rRNA base methylation"/>
    <property type="evidence" value="ECO:0007669"/>
    <property type="project" value="UniProtKB-UniRule"/>
</dbReference>
<dbReference type="GO" id="GO:0030488">
    <property type="term" value="P:tRNA methylation"/>
    <property type="evidence" value="ECO:0007669"/>
    <property type="project" value="UniProtKB-UniRule"/>
</dbReference>
<dbReference type="CDD" id="cd01335">
    <property type="entry name" value="Radical_SAM"/>
    <property type="match status" value="1"/>
</dbReference>
<dbReference type="FunFam" id="1.10.150.530:FF:000003">
    <property type="entry name" value="Dual-specificity RNA methyltransferase RlmN"/>
    <property type="match status" value="1"/>
</dbReference>
<dbReference type="FunFam" id="3.20.20.70:FF:000008">
    <property type="entry name" value="Dual-specificity RNA methyltransferase RlmN"/>
    <property type="match status" value="1"/>
</dbReference>
<dbReference type="Gene3D" id="1.10.150.530">
    <property type="match status" value="1"/>
</dbReference>
<dbReference type="Gene3D" id="3.20.20.70">
    <property type="entry name" value="Aldolase class I"/>
    <property type="match status" value="1"/>
</dbReference>
<dbReference type="HAMAP" id="MF_01849">
    <property type="entry name" value="RNA_methyltr_RlmN"/>
    <property type="match status" value="1"/>
</dbReference>
<dbReference type="InterPro" id="IPR013785">
    <property type="entry name" value="Aldolase_TIM"/>
</dbReference>
<dbReference type="InterPro" id="IPR040072">
    <property type="entry name" value="Methyltransferase_A"/>
</dbReference>
<dbReference type="InterPro" id="IPR048641">
    <property type="entry name" value="RlmN_N"/>
</dbReference>
<dbReference type="InterPro" id="IPR027492">
    <property type="entry name" value="RNA_MTrfase_RlmN"/>
</dbReference>
<dbReference type="InterPro" id="IPR004383">
    <property type="entry name" value="rRNA_lsu_MTrfase_RlmN/Cfr"/>
</dbReference>
<dbReference type="InterPro" id="IPR007197">
    <property type="entry name" value="rSAM"/>
</dbReference>
<dbReference type="NCBIfam" id="TIGR00048">
    <property type="entry name" value="rRNA_mod_RlmN"/>
    <property type="match status" value="1"/>
</dbReference>
<dbReference type="PANTHER" id="PTHR30544">
    <property type="entry name" value="23S RRNA METHYLTRANSFERASE"/>
    <property type="match status" value="1"/>
</dbReference>
<dbReference type="PANTHER" id="PTHR30544:SF5">
    <property type="entry name" value="RADICAL SAM CORE DOMAIN-CONTAINING PROTEIN"/>
    <property type="match status" value="1"/>
</dbReference>
<dbReference type="Pfam" id="PF04055">
    <property type="entry name" value="Radical_SAM"/>
    <property type="match status" value="1"/>
</dbReference>
<dbReference type="Pfam" id="PF21016">
    <property type="entry name" value="RlmN_N"/>
    <property type="match status" value="1"/>
</dbReference>
<dbReference type="PIRSF" id="PIRSF006004">
    <property type="entry name" value="CHP00048"/>
    <property type="match status" value="1"/>
</dbReference>
<dbReference type="SFLD" id="SFLDF00275">
    <property type="entry name" value="adenosine_C2_methyltransferase"/>
    <property type="match status" value="1"/>
</dbReference>
<dbReference type="SFLD" id="SFLDG01062">
    <property type="entry name" value="methyltransferase_(Class_A)"/>
    <property type="match status" value="1"/>
</dbReference>
<dbReference type="SUPFAM" id="SSF102114">
    <property type="entry name" value="Radical SAM enzymes"/>
    <property type="match status" value="1"/>
</dbReference>
<dbReference type="PROSITE" id="PS51918">
    <property type="entry name" value="RADICAL_SAM"/>
    <property type="match status" value="1"/>
</dbReference>
<evidence type="ECO:0000255" key="1">
    <source>
        <dbReference type="HAMAP-Rule" id="MF_01849"/>
    </source>
</evidence>
<evidence type="ECO:0000255" key="2">
    <source>
        <dbReference type="PROSITE-ProRule" id="PRU01266"/>
    </source>
</evidence>
<keyword id="KW-0004">4Fe-4S</keyword>
<keyword id="KW-0963">Cytoplasm</keyword>
<keyword id="KW-1015">Disulfide bond</keyword>
<keyword id="KW-0408">Iron</keyword>
<keyword id="KW-0411">Iron-sulfur</keyword>
<keyword id="KW-0479">Metal-binding</keyword>
<keyword id="KW-0489">Methyltransferase</keyword>
<keyword id="KW-0698">rRNA processing</keyword>
<keyword id="KW-0949">S-adenosyl-L-methionine</keyword>
<keyword id="KW-0808">Transferase</keyword>
<keyword id="KW-0819">tRNA processing</keyword>
<reference key="1">
    <citation type="journal article" date="2010" name="Genome Biol. Evol.">
        <title>Continuing evolution of Burkholderia mallei through genome reduction and large-scale rearrangements.</title>
        <authorList>
            <person name="Losada L."/>
            <person name="Ronning C.M."/>
            <person name="DeShazer D."/>
            <person name="Woods D."/>
            <person name="Fedorova N."/>
            <person name="Kim H.S."/>
            <person name="Shabalina S.A."/>
            <person name="Pearson T.R."/>
            <person name="Brinkac L."/>
            <person name="Tan P."/>
            <person name="Nandi T."/>
            <person name="Crabtree J."/>
            <person name="Badger J."/>
            <person name="Beckstrom-Sternberg S."/>
            <person name="Saqib M."/>
            <person name="Schutzer S.E."/>
            <person name="Keim P."/>
            <person name="Nierman W.C."/>
        </authorList>
    </citation>
    <scope>NUCLEOTIDE SEQUENCE [LARGE SCALE GENOMIC DNA]</scope>
    <source>
        <strain>NCTC 10247</strain>
    </source>
</reference>
<comment type="function">
    <text evidence="1">Specifically methylates position 2 of adenine 2503 in 23S rRNA and position 2 of adenine 37 in tRNAs. m2A2503 modification seems to play a crucial role in the proofreading step occurring at the peptidyl transferase center and thus would serve to optimize ribosomal fidelity.</text>
</comment>
<comment type="catalytic activity">
    <reaction evidence="1">
        <text>adenosine(2503) in 23S rRNA + 2 reduced [2Fe-2S]-[ferredoxin] + 2 S-adenosyl-L-methionine = 2-methyladenosine(2503) in 23S rRNA + 5'-deoxyadenosine + L-methionine + 2 oxidized [2Fe-2S]-[ferredoxin] + S-adenosyl-L-homocysteine</text>
        <dbReference type="Rhea" id="RHEA:42916"/>
        <dbReference type="Rhea" id="RHEA-COMP:10000"/>
        <dbReference type="Rhea" id="RHEA-COMP:10001"/>
        <dbReference type="Rhea" id="RHEA-COMP:10152"/>
        <dbReference type="Rhea" id="RHEA-COMP:10282"/>
        <dbReference type="ChEBI" id="CHEBI:17319"/>
        <dbReference type="ChEBI" id="CHEBI:33737"/>
        <dbReference type="ChEBI" id="CHEBI:33738"/>
        <dbReference type="ChEBI" id="CHEBI:57844"/>
        <dbReference type="ChEBI" id="CHEBI:57856"/>
        <dbReference type="ChEBI" id="CHEBI:59789"/>
        <dbReference type="ChEBI" id="CHEBI:74411"/>
        <dbReference type="ChEBI" id="CHEBI:74497"/>
        <dbReference type="EC" id="2.1.1.192"/>
    </reaction>
</comment>
<comment type="catalytic activity">
    <reaction evidence="1">
        <text>adenosine(37) in tRNA + 2 reduced [2Fe-2S]-[ferredoxin] + 2 S-adenosyl-L-methionine = 2-methyladenosine(37) in tRNA + 5'-deoxyadenosine + L-methionine + 2 oxidized [2Fe-2S]-[ferredoxin] + S-adenosyl-L-homocysteine</text>
        <dbReference type="Rhea" id="RHEA:43332"/>
        <dbReference type="Rhea" id="RHEA-COMP:10000"/>
        <dbReference type="Rhea" id="RHEA-COMP:10001"/>
        <dbReference type="Rhea" id="RHEA-COMP:10162"/>
        <dbReference type="Rhea" id="RHEA-COMP:10485"/>
        <dbReference type="ChEBI" id="CHEBI:17319"/>
        <dbReference type="ChEBI" id="CHEBI:33737"/>
        <dbReference type="ChEBI" id="CHEBI:33738"/>
        <dbReference type="ChEBI" id="CHEBI:57844"/>
        <dbReference type="ChEBI" id="CHEBI:57856"/>
        <dbReference type="ChEBI" id="CHEBI:59789"/>
        <dbReference type="ChEBI" id="CHEBI:74411"/>
        <dbReference type="ChEBI" id="CHEBI:74497"/>
        <dbReference type="EC" id="2.1.1.192"/>
    </reaction>
</comment>
<comment type="cofactor">
    <cofactor evidence="1">
        <name>[4Fe-4S] cluster</name>
        <dbReference type="ChEBI" id="CHEBI:49883"/>
    </cofactor>
    <text evidence="1">Binds 1 [4Fe-4S] cluster. The cluster is coordinated with 3 cysteines and an exchangeable S-adenosyl-L-methionine.</text>
</comment>
<comment type="subcellular location">
    <subcellularLocation>
        <location evidence="1">Cytoplasm</location>
    </subcellularLocation>
</comment>
<comment type="miscellaneous">
    <text evidence="1">Reaction proceeds by a ping-pong mechanism involving intermediate methylation of a conserved cysteine residue.</text>
</comment>
<comment type="similarity">
    <text evidence="1">Belongs to the radical SAM superfamily. RlmN family.</text>
</comment>
<sequence>MAGETIVNLLDLDAEGLVAYCGSLGEKAFRAKQLQRWIHQYNAADFDGMTDLAKSLREKLKGRAVIGTPDILSDHVSADGTRKWLINVGNGNAVETVFIPEETRGTLCVSSQAGCAVNCRFCSTGKQGFSRNLSTGEIVGQLRMAEFALRASLGRAPGPNGKAERVITNVVMMGMGEPLLNYSAVVPAMRLMLDDNAYGLSRRRVTLSTSGVVPMMDRLGAELPVALAVSLHAPNDALRDELVPLNKKHPLRELMAACQRYLKVAPRDFITFEYCMLDGVNDTEAHARELLAVTRDVPCKFNLIPFNPFPESGLVRSKTEQIKRFAQVLIDAGVVTTIRKTRGDDIDAACGQLAGAVKDRTRLAERTGASKIIEVRAV</sequence>
<accession>A3MK77</accession>
<name>RLMN_BURM7</name>
<proteinExistence type="inferred from homology"/>
<gene>
    <name evidence="1" type="primary">rlmN</name>
    <name type="ordered locus">BMA10247_1109</name>
</gene>
<protein>
    <recommendedName>
        <fullName evidence="1">Dual-specificity RNA methyltransferase RlmN</fullName>
        <ecNumber evidence="1">2.1.1.192</ecNumber>
    </recommendedName>
    <alternativeName>
        <fullName evidence="1">23S rRNA (adenine(2503)-C(2))-methyltransferase</fullName>
    </alternativeName>
    <alternativeName>
        <fullName evidence="1">23S rRNA m2A2503 methyltransferase</fullName>
    </alternativeName>
    <alternativeName>
        <fullName evidence="1">Ribosomal RNA large subunit methyltransferase N</fullName>
    </alternativeName>
    <alternativeName>
        <fullName evidence="1">tRNA (adenine(37)-C(2))-methyltransferase</fullName>
    </alternativeName>
    <alternativeName>
        <fullName evidence="1">tRNA m2A37 methyltransferase</fullName>
    </alternativeName>
</protein>
<organism>
    <name type="scientific">Burkholderia mallei (strain NCTC 10247)</name>
    <dbReference type="NCBI Taxonomy" id="320389"/>
    <lineage>
        <taxon>Bacteria</taxon>
        <taxon>Pseudomonadati</taxon>
        <taxon>Pseudomonadota</taxon>
        <taxon>Betaproteobacteria</taxon>
        <taxon>Burkholderiales</taxon>
        <taxon>Burkholderiaceae</taxon>
        <taxon>Burkholderia</taxon>
        <taxon>pseudomallei group</taxon>
    </lineage>
</organism>